<organism>
    <name type="scientific">Vibrio vulnificus (strain CMCP6)</name>
    <dbReference type="NCBI Taxonomy" id="216895"/>
    <lineage>
        <taxon>Bacteria</taxon>
        <taxon>Pseudomonadati</taxon>
        <taxon>Pseudomonadota</taxon>
        <taxon>Gammaproteobacteria</taxon>
        <taxon>Vibrionales</taxon>
        <taxon>Vibrionaceae</taxon>
        <taxon>Vibrio</taxon>
    </lineage>
</organism>
<feature type="chain" id="PRO_0000260820" description="UPF0397 protein VV2_1534">
    <location>
        <begin position="1"/>
        <end position="182"/>
    </location>
</feature>
<feature type="transmembrane region" description="Helical" evidence="1">
    <location>
        <begin position="8"/>
        <end position="28"/>
    </location>
</feature>
<feature type="transmembrane region" description="Helical" evidence="1">
    <location>
        <begin position="41"/>
        <end position="61"/>
    </location>
</feature>
<feature type="transmembrane region" description="Helical" evidence="1">
    <location>
        <begin position="72"/>
        <end position="92"/>
    </location>
</feature>
<feature type="transmembrane region" description="Helical" evidence="1">
    <location>
        <begin position="110"/>
        <end position="130"/>
    </location>
</feature>
<feature type="transmembrane region" description="Helical" evidence="1">
    <location>
        <begin position="146"/>
        <end position="166"/>
    </location>
</feature>
<sequence length="182" mass="19523">MNLSAKTVVVIAIGAALYGIGGLPMFGIPVFANTTLKPAMAVLALFSVLFGPLVGFLVGFIGHWVTDLFAGWGVWLTWVLGSGIVGLIIGLFPSLTRNRLEKGEFNLKDFSLFVVLALLGNVFGYGCSAFLDTILYAEPFTKVFTQLTIIASGNTVLIAIVGYFILKSVAKRNKQSRNLTEA</sequence>
<name>Y5534_VIBVU</name>
<protein>
    <recommendedName>
        <fullName evidence="1">UPF0397 protein VV2_1534</fullName>
    </recommendedName>
</protein>
<keyword id="KW-1003">Cell membrane</keyword>
<keyword id="KW-0472">Membrane</keyword>
<keyword id="KW-0812">Transmembrane</keyword>
<keyword id="KW-1133">Transmembrane helix</keyword>
<dbReference type="EMBL" id="AE016796">
    <property type="protein sequence ID" value="AAO08398.1"/>
    <property type="molecule type" value="Genomic_DNA"/>
</dbReference>
<dbReference type="RefSeq" id="WP_011082383.1">
    <property type="nucleotide sequence ID" value="NC_004460.2"/>
</dbReference>
<dbReference type="SMR" id="Q8D3Z8"/>
<dbReference type="KEGG" id="vvu:VV2_1534"/>
<dbReference type="HOGENOM" id="CLU_120023_0_0_6"/>
<dbReference type="Proteomes" id="UP000002275">
    <property type="component" value="Chromosome 2"/>
</dbReference>
<dbReference type="GO" id="GO:0005886">
    <property type="term" value="C:plasma membrane"/>
    <property type="evidence" value="ECO:0007669"/>
    <property type="project" value="UniProtKB-SubCell"/>
</dbReference>
<dbReference type="Gene3D" id="1.10.1760.20">
    <property type="match status" value="1"/>
</dbReference>
<dbReference type="HAMAP" id="MF_01572">
    <property type="entry name" value="UPF0397"/>
    <property type="match status" value="1"/>
</dbReference>
<dbReference type="InterPro" id="IPR009825">
    <property type="entry name" value="ECF_substrate-spec-like"/>
</dbReference>
<dbReference type="InterPro" id="IPR022914">
    <property type="entry name" value="UPF0397"/>
</dbReference>
<dbReference type="NCBIfam" id="NF010182">
    <property type="entry name" value="PRK13661.1"/>
    <property type="match status" value="1"/>
</dbReference>
<dbReference type="PANTHER" id="PTHR37815">
    <property type="entry name" value="UPF0397 PROTEIN BC_2624-RELATED"/>
    <property type="match status" value="1"/>
</dbReference>
<dbReference type="PANTHER" id="PTHR37815:SF3">
    <property type="entry name" value="UPF0397 PROTEIN SPR0429"/>
    <property type="match status" value="1"/>
</dbReference>
<dbReference type="Pfam" id="PF07155">
    <property type="entry name" value="ECF-ribofla_trS"/>
    <property type="match status" value="1"/>
</dbReference>
<comment type="subcellular location">
    <subcellularLocation>
        <location evidence="1">Cell membrane</location>
        <topology evidence="1">Multi-pass membrane protein</topology>
    </subcellularLocation>
</comment>
<comment type="similarity">
    <text evidence="1">Belongs to the UPF0397 family.</text>
</comment>
<evidence type="ECO:0000255" key="1">
    <source>
        <dbReference type="HAMAP-Rule" id="MF_01572"/>
    </source>
</evidence>
<gene>
    <name type="ordered locus">VV2_1534</name>
</gene>
<proteinExistence type="inferred from homology"/>
<reference key="1">
    <citation type="submission" date="2002-12" db="EMBL/GenBank/DDBJ databases">
        <title>Complete genome sequence of Vibrio vulnificus CMCP6.</title>
        <authorList>
            <person name="Rhee J.H."/>
            <person name="Kim S.Y."/>
            <person name="Chung S.S."/>
            <person name="Kim J.J."/>
            <person name="Moon Y.H."/>
            <person name="Jeong H."/>
            <person name="Choy H.E."/>
        </authorList>
    </citation>
    <scope>NUCLEOTIDE SEQUENCE [LARGE SCALE GENOMIC DNA]</scope>
    <source>
        <strain>CMCP6</strain>
    </source>
</reference>
<accession>Q8D3Z8</accession>